<gene>
    <name type="primary">P10</name>
</gene>
<feature type="chain" id="PRO_0000132881" description="Protein p10">
    <location>
        <begin position="1"/>
        <end position="81"/>
    </location>
</feature>
<feature type="region of interest" description="Disordered" evidence="1">
    <location>
        <begin position="62"/>
        <end position="81"/>
    </location>
</feature>
<evidence type="ECO:0000256" key="1">
    <source>
        <dbReference type="SAM" id="MobiDB-lite"/>
    </source>
</evidence>
<evidence type="ECO:0000305" key="2"/>
<accession>P41714</accession>
<comment type="function">
    <text>Seems to be involved in the morphogenesis of the polyhedra. Forms extensive fibrillar structures in both nucleus and cytoplasm. It is involved in the liberation of polyhedra from infected-insect cell.</text>
</comment>
<comment type="similarity">
    <text evidence="2">Belongs to the baculoviridae p10 family.</text>
</comment>
<sequence>MSKPSILQQILTAVQDVDTKVDALQAQLTELDGKVQPLDGLSEQLTALDTKVTTIQDILGGAEVPDVPLPDNPLNKTRSRK</sequence>
<keyword id="KW-0426">Late protein</keyword>
<keyword id="KW-0842">Viral occlusion body</keyword>
<protein>
    <recommendedName>
        <fullName>Protein p10</fullName>
    </recommendedName>
    <alternativeName>
        <fullName>Fibrous body protein</fullName>
    </alternativeName>
</protein>
<proteinExistence type="inferred from homology"/>
<name>VP10_NPVCF</name>
<organismHost>
    <name type="scientific">Choristoneura fumiferana</name>
    <name type="common">Spruce budworm moth</name>
    <name type="synonym">Archips fumiferana</name>
    <dbReference type="NCBI Taxonomy" id="7141"/>
</organismHost>
<organism>
    <name type="scientific">Choristoneura fumiferana nuclear polyhedrosis virus</name>
    <name type="common">CfMNPV</name>
    <dbReference type="NCBI Taxonomy" id="208973"/>
    <lineage>
        <taxon>Viruses</taxon>
        <taxon>Viruses incertae sedis</taxon>
        <taxon>Naldaviricetes</taxon>
        <taxon>Lefavirales</taxon>
        <taxon>Baculoviridae</taxon>
        <taxon>Alphabaculovirus</taxon>
        <taxon>Alphabaculovirus chofumiferanae</taxon>
    </lineage>
</organism>
<reference key="1">
    <citation type="journal article" date="1995" name="J. Gen. Virol.">
        <title>Characterization of the baculovirus Choristoneura fumiferana multicapsid nuclear polyhedrosis virus p10 gene indicates that the polypeptide contains a coiled-coil domain.</title>
        <authorList>
            <person name="Wilson J.A."/>
            <person name="Hill J.E."/>
            <person name="Kuzio J."/>
            <person name="Faulkner P."/>
        </authorList>
    </citation>
    <scope>NUCLEOTIDE SEQUENCE [GENOMIC DNA]</scope>
</reference>
<dbReference type="EMBL" id="M98513">
    <property type="protein sequence ID" value="AAC37926.1"/>
    <property type="molecule type" value="Genomic_DNA"/>
</dbReference>
<dbReference type="PIR" id="S29859">
    <property type="entry name" value="S29859"/>
</dbReference>
<dbReference type="RefSeq" id="NP_848440.1">
    <property type="nucleotide sequence ID" value="NC_004778.3"/>
</dbReference>
<dbReference type="SMR" id="P41714"/>
<dbReference type="KEGG" id="vg:1482761"/>
<dbReference type="OrthoDB" id="21496at10239"/>
<dbReference type="GO" id="GO:0039679">
    <property type="term" value="C:viral occlusion body"/>
    <property type="evidence" value="ECO:0007669"/>
    <property type="project" value="UniProtKB-KW"/>
</dbReference>
<dbReference type="Gene3D" id="1.20.5.340">
    <property type="match status" value="1"/>
</dbReference>
<dbReference type="InterPro" id="IPR008702">
    <property type="entry name" value="NPV_P10"/>
</dbReference>
<dbReference type="Pfam" id="PF05531">
    <property type="entry name" value="NPV_P10"/>
    <property type="match status" value="1"/>
</dbReference>